<evidence type="ECO:0000250" key="1"/>
<evidence type="ECO:0000269" key="2">
    <source>
    </source>
</evidence>
<evidence type="ECO:0000305" key="3"/>
<comment type="catalytic activity">
    <reaction>
        <text>a 2-oxocarboxylate + H(+) = an aldehyde + CO2</text>
        <dbReference type="Rhea" id="RHEA:11628"/>
        <dbReference type="ChEBI" id="CHEBI:15378"/>
        <dbReference type="ChEBI" id="CHEBI:16526"/>
        <dbReference type="ChEBI" id="CHEBI:17478"/>
        <dbReference type="ChEBI" id="CHEBI:35179"/>
        <dbReference type="EC" id="4.1.1.1"/>
    </reaction>
</comment>
<comment type="cofactor">
    <cofactor>
        <name>a metal cation</name>
        <dbReference type="ChEBI" id="CHEBI:25213"/>
    </cofactor>
    <text>Binds 1 metal ion per subunit.</text>
</comment>
<comment type="cofactor">
    <cofactor>
        <name>thiamine diphosphate</name>
        <dbReference type="ChEBI" id="CHEBI:58937"/>
    </cofactor>
    <text>Binds 1 thiamine pyrophosphate per subunit.</text>
</comment>
<comment type="subunit">
    <text evidence="3">Homotetramer.</text>
</comment>
<comment type="tissue specificity">
    <text evidence="2">Expressed at low levels in roots and shoots.</text>
</comment>
<comment type="induction">
    <text evidence="2">By wounding and paraquat. Not induced by anoxia.</text>
</comment>
<comment type="similarity">
    <text evidence="3">Belongs to the TPP enzyme family.</text>
</comment>
<dbReference type="EC" id="4.1.1.1"/>
<dbReference type="EMBL" id="AL161746">
    <property type="protein sequence ID" value="CAB81916.1"/>
    <property type="molecule type" value="Genomic_DNA"/>
</dbReference>
<dbReference type="EMBL" id="CP002688">
    <property type="protein sequence ID" value="AED90328.1"/>
    <property type="molecule type" value="Genomic_DNA"/>
</dbReference>
<dbReference type="EMBL" id="BT006455">
    <property type="protein sequence ID" value="AAP21263.1"/>
    <property type="molecule type" value="mRNA"/>
</dbReference>
<dbReference type="EMBL" id="AK227701">
    <property type="protein sequence ID" value="BAE99688.1"/>
    <property type="molecule type" value="mRNA"/>
</dbReference>
<dbReference type="PIR" id="T48155">
    <property type="entry name" value="T48155"/>
</dbReference>
<dbReference type="RefSeq" id="NP_195753.1">
    <property type="nucleotide sequence ID" value="NM_120211.3"/>
</dbReference>
<dbReference type="SMR" id="Q9M039"/>
<dbReference type="BioGRID" id="16690">
    <property type="interactions" value="7"/>
</dbReference>
<dbReference type="FunCoup" id="Q9M039">
    <property type="interactions" value="342"/>
</dbReference>
<dbReference type="STRING" id="3702.Q9M039"/>
<dbReference type="PaxDb" id="3702-AT5G01330.1"/>
<dbReference type="ProteomicsDB" id="236718"/>
<dbReference type="EnsemblPlants" id="AT5G01330.1">
    <property type="protein sequence ID" value="AT5G01330.1"/>
    <property type="gene ID" value="AT5G01330"/>
</dbReference>
<dbReference type="GeneID" id="831414"/>
<dbReference type="Gramene" id="AT5G01330.1">
    <property type="protein sequence ID" value="AT5G01330.1"/>
    <property type="gene ID" value="AT5G01330"/>
</dbReference>
<dbReference type="KEGG" id="ath:AT5G01330"/>
<dbReference type="Araport" id="AT5G01330"/>
<dbReference type="TAIR" id="AT5G01330">
    <property type="gene designation" value="PDC3"/>
</dbReference>
<dbReference type="eggNOG" id="KOG1184">
    <property type="taxonomic scope" value="Eukaryota"/>
</dbReference>
<dbReference type="HOGENOM" id="CLU_013748_0_2_1"/>
<dbReference type="InParanoid" id="Q9M039"/>
<dbReference type="OMA" id="IREHFHA"/>
<dbReference type="PhylomeDB" id="Q9M039"/>
<dbReference type="BioCyc" id="ARA:AT5G01330-MONOMER"/>
<dbReference type="BRENDA" id="4.1.1.1">
    <property type="organism ID" value="399"/>
</dbReference>
<dbReference type="PRO" id="PR:Q9M039"/>
<dbReference type="Proteomes" id="UP000006548">
    <property type="component" value="Chromosome 5"/>
</dbReference>
<dbReference type="ExpressionAtlas" id="Q9M039">
    <property type="expression patterns" value="baseline and differential"/>
</dbReference>
<dbReference type="GO" id="GO:0000287">
    <property type="term" value="F:magnesium ion binding"/>
    <property type="evidence" value="ECO:0007669"/>
    <property type="project" value="InterPro"/>
</dbReference>
<dbReference type="GO" id="GO:0004737">
    <property type="term" value="F:pyruvate decarboxylase activity"/>
    <property type="evidence" value="ECO:0007669"/>
    <property type="project" value="UniProtKB-EC"/>
</dbReference>
<dbReference type="GO" id="GO:0030976">
    <property type="term" value="F:thiamine pyrophosphate binding"/>
    <property type="evidence" value="ECO:0007669"/>
    <property type="project" value="InterPro"/>
</dbReference>
<dbReference type="CDD" id="cd02005">
    <property type="entry name" value="TPP_PDC_IPDC"/>
    <property type="match status" value="1"/>
</dbReference>
<dbReference type="CDD" id="cd07038">
    <property type="entry name" value="TPP_PYR_PDC_IPDC_like"/>
    <property type="match status" value="1"/>
</dbReference>
<dbReference type="FunFam" id="3.40.50.1220:FF:000009">
    <property type="entry name" value="Pyruvate decarboxylase 1"/>
    <property type="match status" value="1"/>
</dbReference>
<dbReference type="FunFam" id="3.40.50.970:FF:000021">
    <property type="entry name" value="Pyruvate decarboxylase 1"/>
    <property type="match status" value="1"/>
</dbReference>
<dbReference type="FunFam" id="3.40.50.970:FF:000017">
    <property type="entry name" value="pyruvate decarboxylase 1"/>
    <property type="match status" value="1"/>
</dbReference>
<dbReference type="Gene3D" id="3.40.50.970">
    <property type="match status" value="2"/>
</dbReference>
<dbReference type="Gene3D" id="3.40.50.1220">
    <property type="entry name" value="TPP-binding domain"/>
    <property type="match status" value="1"/>
</dbReference>
<dbReference type="InterPro" id="IPR029035">
    <property type="entry name" value="DHS-like_NAD/FAD-binding_dom"/>
</dbReference>
<dbReference type="InterPro" id="IPR012110">
    <property type="entry name" value="PDC/IPDC-like"/>
</dbReference>
<dbReference type="InterPro" id="IPR029061">
    <property type="entry name" value="THDP-binding"/>
</dbReference>
<dbReference type="InterPro" id="IPR012000">
    <property type="entry name" value="Thiamin_PyroP_enz_cen_dom"/>
</dbReference>
<dbReference type="InterPro" id="IPR012001">
    <property type="entry name" value="Thiamin_PyroP_enz_TPP-bd_dom"/>
</dbReference>
<dbReference type="InterPro" id="IPR000399">
    <property type="entry name" value="TPP-bd_CS"/>
</dbReference>
<dbReference type="InterPro" id="IPR011766">
    <property type="entry name" value="TPP_enzyme_TPP-bd"/>
</dbReference>
<dbReference type="InterPro" id="IPR047214">
    <property type="entry name" value="TPP_PDC_IPDC"/>
</dbReference>
<dbReference type="InterPro" id="IPR047213">
    <property type="entry name" value="TPP_PYR_PDC_IPDC-like"/>
</dbReference>
<dbReference type="PANTHER" id="PTHR43452">
    <property type="entry name" value="PYRUVATE DECARBOXYLASE"/>
    <property type="match status" value="1"/>
</dbReference>
<dbReference type="PANTHER" id="PTHR43452:SF38">
    <property type="entry name" value="PYRUVATE DECARBOXYLASE 3-RELATED"/>
    <property type="match status" value="1"/>
</dbReference>
<dbReference type="Pfam" id="PF02775">
    <property type="entry name" value="TPP_enzyme_C"/>
    <property type="match status" value="1"/>
</dbReference>
<dbReference type="Pfam" id="PF00205">
    <property type="entry name" value="TPP_enzyme_M"/>
    <property type="match status" value="1"/>
</dbReference>
<dbReference type="Pfam" id="PF02776">
    <property type="entry name" value="TPP_enzyme_N"/>
    <property type="match status" value="1"/>
</dbReference>
<dbReference type="PIRSF" id="PIRSF036565">
    <property type="entry name" value="Pyruvt_ip_decrb"/>
    <property type="match status" value="1"/>
</dbReference>
<dbReference type="SUPFAM" id="SSF52467">
    <property type="entry name" value="DHS-like NAD/FAD-binding domain"/>
    <property type="match status" value="1"/>
</dbReference>
<dbReference type="SUPFAM" id="SSF52518">
    <property type="entry name" value="Thiamin diphosphate-binding fold (THDP-binding)"/>
    <property type="match status" value="2"/>
</dbReference>
<dbReference type="PROSITE" id="PS00187">
    <property type="entry name" value="TPP_ENZYMES"/>
    <property type="match status" value="1"/>
</dbReference>
<sequence length="592" mass="64482">MDVRSLPSNGVATIQDSAPTAATILGSSAATLGRHLSRRLVQAGVTDIFTVPGDFNLSLLDQLIANPELNNIGCCNELNAGYAADGYARSRGVGACVVTFTVGGLSVLNAIAGAYSENLPVICIVGGPNSNDFGTNRILHHTIGLPDFSQELRCFQTVTCYQAVVNHLEDAHEQIDKAIATALRESKPVYISISCNLAAIPHPTFASYPVPFDLTPRLSNKDCLEAAVEATLEFLNKAVKPVMVGGPKLRVAKARDAFVELADASGYPVAVMPSAKGFVPENHPHFIGTYWGAVSTLFCSEIVESADAYIFAGPIFNDYSSVGYSLLLKKEKAIIVHPDSVVVANGPTFGCVRMSEFFRELAKRVKPNKTAYENYHRIFVPEGKPLKCKPREPLRINAMFQHIQKMLSNETAVIAETGDSWFNCQKLKLPKGCGYEFQMQYGSIGWSVGATLGYAQATPEKRVLSFIGDGSFQVTAQDVSTMIRNGQKTIIFLINNGGYTIEVEIHDGPYNVIKNWNYTGLVDAIHNGEGKCWTTKVRYEEELVEAINTATLEKKDSLCFIEVIVHKDDTSKELLEWGSRVSAANGRPPNPQ</sequence>
<organism>
    <name type="scientific">Arabidopsis thaliana</name>
    <name type="common">Mouse-ear cress</name>
    <dbReference type="NCBI Taxonomy" id="3702"/>
    <lineage>
        <taxon>Eukaryota</taxon>
        <taxon>Viridiplantae</taxon>
        <taxon>Streptophyta</taxon>
        <taxon>Embryophyta</taxon>
        <taxon>Tracheophyta</taxon>
        <taxon>Spermatophyta</taxon>
        <taxon>Magnoliopsida</taxon>
        <taxon>eudicotyledons</taxon>
        <taxon>Gunneridae</taxon>
        <taxon>Pentapetalae</taxon>
        <taxon>rosids</taxon>
        <taxon>malvids</taxon>
        <taxon>Brassicales</taxon>
        <taxon>Brassicaceae</taxon>
        <taxon>Camelineae</taxon>
        <taxon>Arabidopsis</taxon>
    </lineage>
</organism>
<proteinExistence type="evidence at transcript level"/>
<keyword id="KW-0210">Decarboxylase</keyword>
<keyword id="KW-0456">Lyase</keyword>
<keyword id="KW-0460">Magnesium</keyword>
<keyword id="KW-0479">Metal-binding</keyword>
<keyword id="KW-0670">Pyruvate</keyword>
<keyword id="KW-1185">Reference proteome</keyword>
<keyword id="KW-0346">Stress response</keyword>
<keyword id="KW-0786">Thiamine pyrophosphate</keyword>
<accession>Q9M039</accession>
<feature type="chain" id="PRO_0000422314" description="Pyruvate decarboxylase 3">
    <location>
        <begin position="1"/>
        <end position="592"/>
    </location>
</feature>
<feature type="region of interest" description="Thiamine pyrophosphate binding" evidence="1">
    <location>
        <begin position="419"/>
        <end position="501"/>
    </location>
</feature>
<feature type="binding site" evidence="1">
    <location>
        <position position="54"/>
    </location>
    <ligand>
        <name>substrate</name>
    </ligand>
</feature>
<feature type="binding site" evidence="1">
    <location>
        <position position="141"/>
    </location>
    <ligand>
        <name>substrate</name>
    </ligand>
</feature>
<feature type="binding site" evidence="1">
    <location>
        <position position="469"/>
    </location>
    <ligand>
        <name>Mg(2+)</name>
        <dbReference type="ChEBI" id="CHEBI:18420"/>
    </ligand>
</feature>
<feature type="binding site" evidence="1">
    <location>
        <position position="496"/>
    </location>
    <ligand>
        <name>Mg(2+)</name>
        <dbReference type="ChEBI" id="CHEBI:18420"/>
    </ligand>
</feature>
<feature type="binding site" evidence="1">
    <location>
        <position position="498"/>
    </location>
    <ligand>
        <name>Mg(2+)</name>
        <dbReference type="ChEBI" id="CHEBI:18420"/>
    </ligand>
</feature>
<feature type="binding site" evidence="1">
    <location>
        <position position="502"/>
    </location>
    <ligand>
        <name>substrate</name>
    </ligand>
</feature>
<protein>
    <recommendedName>
        <fullName>Pyruvate decarboxylase 3</fullName>
        <shortName>AtPDC3</shortName>
        <ecNumber>4.1.1.1</ecNumber>
    </recommendedName>
</protein>
<gene>
    <name type="primary">PDC3</name>
    <name type="ordered locus">At5g01330</name>
    <name type="ORF">T10O8.40</name>
</gene>
<reference key="1">
    <citation type="journal article" date="2000" name="Nature">
        <title>Sequence and analysis of chromosome 5 of the plant Arabidopsis thaliana.</title>
        <authorList>
            <person name="Tabata S."/>
            <person name="Kaneko T."/>
            <person name="Nakamura Y."/>
            <person name="Kotani H."/>
            <person name="Kato T."/>
            <person name="Asamizu E."/>
            <person name="Miyajima N."/>
            <person name="Sasamoto S."/>
            <person name="Kimura T."/>
            <person name="Hosouchi T."/>
            <person name="Kawashima K."/>
            <person name="Kohara M."/>
            <person name="Matsumoto M."/>
            <person name="Matsuno A."/>
            <person name="Muraki A."/>
            <person name="Nakayama S."/>
            <person name="Nakazaki N."/>
            <person name="Naruo K."/>
            <person name="Okumura S."/>
            <person name="Shinpo S."/>
            <person name="Takeuchi C."/>
            <person name="Wada T."/>
            <person name="Watanabe A."/>
            <person name="Yamada M."/>
            <person name="Yasuda M."/>
            <person name="Sato S."/>
            <person name="de la Bastide M."/>
            <person name="Huang E."/>
            <person name="Spiegel L."/>
            <person name="Gnoj L."/>
            <person name="O'Shaughnessy A."/>
            <person name="Preston R."/>
            <person name="Habermann K."/>
            <person name="Murray J."/>
            <person name="Johnson D."/>
            <person name="Rohlfing T."/>
            <person name="Nelson J."/>
            <person name="Stoneking T."/>
            <person name="Pepin K."/>
            <person name="Spieth J."/>
            <person name="Sekhon M."/>
            <person name="Armstrong J."/>
            <person name="Becker M."/>
            <person name="Belter E."/>
            <person name="Cordum H."/>
            <person name="Cordes M."/>
            <person name="Courtney L."/>
            <person name="Courtney W."/>
            <person name="Dante M."/>
            <person name="Du H."/>
            <person name="Edwards J."/>
            <person name="Fryman J."/>
            <person name="Haakensen B."/>
            <person name="Lamar E."/>
            <person name="Latreille P."/>
            <person name="Leonard S."/>
            <person name="Meyer R."/>
            <person name="Mulvaney E."/>
            <person name="Ozersky P."/>
            <person name="Riley A."/>
            <person name="Strowmatt C."/>
            <person name="Wagner-McPherson C."/>
            <person name="Wollam A."/>
            <person name="Yoakum M."/>
            <person name="Bell M."/>
            <person name="Dedhia N."/>
            <person name="Parnell L."/>
            <person name="Shah R."/>
            <person name="Rodriguez M."/>
            <person name="Hoon See L."/>
            <person name="Vil D."/>
            <person name="Baker J."/>
            <person name="Kirchoff K."/>
            <person name="Toth K."/>
            <person name="King L."/>
            <person name="Bahret A."/>
            <person name="Miller B."/>
            <person name="Marra M.A."/>
            <person name="Martienssen R."/>
            <person name="McCombie W.R."/>
            <person name="Wilson R.K."/>
            <person name="Murphy G."/>
            <person name="Bancroft I."/>
            <person name="Volckaert G."/>
            <person name="Wambutt R."/>
            <person name="Duesterhoeft A."/>
            <person name="Stiekema W."/>
            <person name="Pohl T."/>
            <person name="Entian K.-D."/>
            <person name="Terryn N."/>
            <person name="Hartley N."/>
            <person name="Bent E."/>
            <person name="Johnson S."/>
            <person name="Langham S.-A."/>
            <person name="McCullagh B."/>
            <person name="Robben J."/>
            <person name="Grymonprez B."/>
            <person name="Zimmermann W."/>
            <person name="Ramsperger U."/>
            <person name="Wedler H."/>
            <person name="Balke K."/>
            <person name="Wedler E."/>
            <person name="Peters S."/>
            <person name="van Staveren M."/>
            <person name="Dirkse W."/>
            <person name="Mooijman P."/>
            <person name="Klein Lankhorst R."/>
            <person name="Weitzenegger T."/>
            <person name="Bothe G."/>
            <person name="Rose M."/>
            <person name="Hauf J."/>
            <person name="Berneiser S."/>
            <person name="Hempel S."/>
            <person name="Feldpausch M."/>
            <person name="Lamberth S."/>
            <person name="Villarroel R."/>
            <person name="Gielen J."/>
            <person name="Ardiles W."/>
            <person name="Bents O."/>
            <person name="Lemcke K."/>
            <person name="Kolesov G."/>
            <person name="Mayer K.F.X."/>
            <person name="Rudd S."/>
            <person name="Schoof H."/>
            <person name="Schueller C."/>
            <person name="Zaccaria P."/>
            <person name="Mewes H.-W."/>
            <person name="Bevan M."/>
            <person name="Fransz P.F."/>
        </authorList>
    </citation>
    <scope>NUCLEOTIDE SEQUENCE [LARGE SCALE GENOMIC DNA]</scope>
    <source>
        <strain>cv. Columbia</strain>
    </source>
</reference>
<reference key="2">
    <citation type="journal article" date="2017" name="Plant J.">
        <title>Araport11: a complete reannotation of the Arabidopsis thaliana reference genome.</title>
        <authorList>
            <person name="Cheng C.Y."/>
            <person name="Krishnakumar V."/>
            <person name="Chan A.P."/>
            <person name="Thibaud-Nissen F."/>
            <person name="Schobel S."/>
            <person name="Town C.D."/>
        </authorList>
    </citation>
    <scope>GENOME REANNOTATION</scope>
    <source>
        <strain>cv. Columbia</strain>
    </source>
</reference>
<reference key="3">
    <citation type="journal article" date="2003" name="Science">
        <title>Empirical analysis of transcriptional activity in the Arabidopsis genome.</title>
        <authorList>
            <person name="Yamada K."/>
            <person name="Lim J."/>
            <person name="Dale J.M."/>
            <person name="Chen H."/>
            <person name="Shinn P."/>
            <person name="Palm C.J."/>
            <person name="Southwick A.M."/>
            <person name="Wu H.C."/>
            <person name="Kim C.J."/>
            <person name="Nguyen M."/>
            <person name="Pham P.K."/>
            <person name="Cheuk R.F."/>
            <person name="Karlin-Newmann G."/>
            <person name="Liu S.X."/>
            <person name="Lam B."/>
            <person name="Sakano H."/>
            <person name="Wu T."/>
            <person name="Yu G."/>
            <person name="Miranda M."/>
            <person name="Quach H.L."/>
            <person name="Tripp M."/>
            <person name="Chang C.H."/>
            <person name="Lee J.M."/>
            <person name="Toriumi M.J."/>
            <person name="Chan M.M."/>
            <person name="Tang C.C."/>
            <person name="Onodera C.S."/>
            <person name="Deng J.M."/>
            <person name="Akiyama K."/>
            <person name="Ansari Y."/>
            <person name="Arakawa T."/>
            <person name="Banh J."/>
            <person name="Banno F."/>
            <person name="Bowser L."/>
            <person name="Brooks S.Y."/>
            <person name="Carninci P."/>
            <person name="Chao Q."/>
            <person name="Choy N."/>
            <person name="Enju A."/>
            <person name="Goldsmith A.D."/>
            <person name="Gurjal M."/>
            <person name="Hansen N.F."/>
            <person name="Hayashizaki Y."/>
            <person name="Johnson-Hopson C."/>
            <person name="Hsuan V.W."/>
            <person name="Iida K."/>
            <person name="Karnes M."/>
            <person name="Khan S."/>
            <person name="Koesema E."/>
            <person name="Ishida J."/>
            <person name="Jiang P.X."/>
            <person name="Jones T."/>
            <person name="Kawai J."/>
            <person name="Kamiya A."/>
            <person name="Meyers C."/>
            <person name="Nakajima M."/>
            <person name="Narusaka M."/>
            <person name="Seki M."/>
            <person name="Sakurai T."/>
            <person name="Satou M."/>
            <person name="Tamse R."/>
            <person name="Vaysberg M."/>
            <person name="Wallender E.K."/>
            <person name="Wong C."/>
            <person name="Yamamura Y."/>
            <person name="Yuan S."/>
            <person name="Shinozaki K."/>
            <person name="Davis R.W."/>
            <person name="Theologis A."/>
            <person name="Ecker J.R."/>
        </authorList>
    </citation>
    <scope>NUCLEOTIDE SEQUENCE [LARGE SCALE MRNA]</scope>
    <source>
        <strain>cv. Columbia</strain>
    </source>
</reference>
<reference key="4">
    <citation type="submission" date="2006-07" db="EMBL/GenBank/DDBJ databases">
        <title>Large-scale analysis of RIKEN Arabidopsis full-length (RAFL) cDNAs.</title>
        <authorList>
            <person name="Totoki Y."/>
            <person name="Seki M."/>
            <person name="Ishida J."/>
            <person name="Nakajima M."/>
            <person name="Enju A."/>
            <person name="Kamiya A."/>
            <person name="Narusaka M."/>
            <person name="Shin-i T."/>
            <person name="Nakagawa M."/>
            <person name="Sakamoto N."/>
            <person name="Oishi K."/>
            <person name="Kohara Y."/>
            <person name="Kobayashi M."/>
            <person name="Toyoda A."/>
            <person name="Sakaki Y."/>
            <person name="Sakurai T."/>
            <person name="Iida K."/>
            <person name="Akiyama K."/>
            <person name="Satou M."/>
            <person name="Toyoda T."/>
            <person name="Konagaya A."/>
            <person name="Carninci P."/>
            <person name="Kawai J."/>
            <person name="Hayashizaki Y."/>
            <person name="Shinozaki K."/>
        </authorList>
    </citation>
    <scope>NUCLEOTIDE SEQUENCE [LARGE SCALE MRNA]</scope>
    <source>
        <strain>cv. Columbia</strain>
    </source>
</reference>
<reference key="5">
    <citation type="journal article" date="2003" name="Plant Physiol.">
        <title>The pyruvate decarboxylase1 gene of Arabidopsis is required during anoxia but not other environmental stresses.</title>
        <authorList>
            <person name="Kuersteiner O."/>
            <person name="Dupuis I."/>
            <person name="Kuhlemeier C."/>
        </authorList>
    </citation>
    <scope>TISSUE SPECIFICITY</scope>
    <scope>INDUCTION</scope>
</reference>
<name>PDC3_ARATH</name>